<proteinExistence type="inferred from homology"/>
<gene>
    <name type="primary">gatC</name>
    <name type="ordered locus">RP153</name>
</gene>
<sequence length="100" mass="11344">MITKEEAQKIAKLARLKFEKDIVEKFSTQLSTIMNMINILNEIDCKDIEPLTSVSNMNARMREDTVTSSDLSNKLFDNVSGNSAKLAKEVKYFITPKVVE</sequence>
<dbReference type="EC" id="6.3.5.-"/>
<dbReference type="EMBL" id="AJ235270">
    <property type="protein sequence ID" value="CAA14621.1"/>
    <property type="molecule type" value="Genomic_DNA"/>
</dbReference>
<dbReference type="PIR" id="F71725">
    <property type="entry name" value="F71725"/>
</dbReference>
<dbReference type="RefSeq" id="NP_220544.1">
    <property type="nucleotide sequence ID" value="NC_000963.1"/>
</dbReference>
<dbReference type="RefSeq" id="WP_004597219.1">
    <property type="nucleotide sequence ID" value="NC_000963.1"/>
</dbReference>
<dbReference type="SMR" id="Q9ZE09"/>
<dbReference type="STRING" id="272947.gene:17555236"/>
<dbReference type="EnsemblBacteria" id="CAA14621">
    <property type="protein sequence ID" value="CAA14621"/>
    <property type="gene ID" value="CAA14621"/>
</dbReference>
<dbReference type="GeneID" id="57569282"/>
<dbReference type="KEGG" id="rpr:RP153"/>
<dbReference type="PATRIC" id="fig|272947.5.peg.158"/>
<dbReference type="eggNOG" id="COG0721">
    <property type="taxonomic scope" value="Bacteria"/>
</dbReference>
<dbReference type="HOGENOM" id="CLU_105899_2_0_5"/>
<dbReference type="OrthoDB" id="9794326at2"/>
<dbReference type="Proteomes" id="UP000002480">
    <property type="component" value="Chromosome"/>
</dbReference>
<dbReference type="GO" id="GO:0050566">
    <property type="term" value="F:asparaginyl-tRNA synthase (glutamine-hydrolyzing) activity"/>
    <property type="evidence" value="ECO:0007669"/>
    <property type="project" value="RHEA"/>
</dbReference>
<dbReference type="GO" id="GO:0005524">
    <property type="term" value="F:ATP binding"/>
    <property type="evidence" value="ECO:0007669"/>
    <property type="project" value="UniProtKB-KW"/>
</dbReference>
<dbReference type="GO" id="GO:0050567">
    <property type="term" value="F:glutaminyl-tRNA synthase (glutamine-hydrolyzing) activity"/>
    <property type="evidence" value="ECO:0007669"/>
    <property type="project" value="UniProtKB-UniRule"/>
</dbReference>
<dbReference type="GO" id="GO:0006450">
    <property type="term" value="P:regulation of translational fidelity"/>
    <property type="evidence" value="ECO:0007669"/>
    <property type="project" value="InterPro"/>
</dbReference>
<dbReference type="GO" id="GO:0006412">
    <property type="term" value="P:translation"/>
    <property type="evidence" value="ECO:0007669"/>
    <property type="project" value="UniProtKB-UniRule"/>
</dbReference>
<dbReference type="Gene3D" id="1.10.20.60">
    <property type="entry name" value="Glu-tRNAGln amidotransferase C subunit, N-terminal domain"/>
    <property type="match status" value="1"/>
</dbReference>
<dbReference type="HAMAP" id="MF_00122">
    <property type="entry name" value="GatC"/>
    <property type="match status" value="1"/>
</dbReference>
<dbReference type="InterPro" id="IPR036113">
    <property type="entry name" value="Asp/Glu-ADT_sf_sub_c"/>
</dbReference>
<dbReference type="InterPro" id="IPR003837">
    <property type="entry name" value="GatC"/>
</dbReference>
<dbReference type="NCBIfam" id="TIGR00135">
    <property type="entry name" value="gatC"/>
    <property type="match status" value="1"/>
</dbReference>
<dbReference type="Pfam" id="PF02686">
    <property type="entry name" value="GatC"/>
    <property type="match status" value="1"/>
</dbReference>
<dbReference type="SUPFAM" id="SSF141000">
    <property type="entry name" value="Glu-tRNAGln amidotransferase C subunit"/>
    <property type="match status" value="1"/>
</dbReference>
<protein>
    <recommendedName>
        <fullName>Glutamyl-tRNA(Gln) amidotransferase subunit C</fullName>
        <shortName>Glu-ADT subunit C</shortName>
        <ecNumber>6.3.5.-</ecNumber>
    </recommendedName>
</protein>
<reference key="1">
    <citation type="journal article" date="1998" name="Nature">
        <title>The genome sequence of Rickettsia prowazekii and the origin of mitochondria.</title>
        <authorList>
            <person name="Andersson S.G.E."/>
            <person name="Zomorodipour A."/>
            <person name="Andersson J.O."/>
            <person name="Sicheritz-Ponten T."/>
            <person name="Alsmark U.C.M."/>
            <person name="Podowski R.M."/>
            <person name="Naeslund A.K."/>
            <person name="Eriksson A.-S."/>
            <person name="Winkler H.H."/>
            <person name="Kurland C.G."/>
        </authorList>
    </citation>
    <scope>NUCLEOTIDE SEQUENCE [LARGE SCALE GENOMIC DNA]</scope>
    <source>
        <strain>Madrid E</strain>
    </source>
</reference>
<accession>Q9ZE09</accession>
<comment type="function">
    <text evidence="1">Allows the formation of correctly charged Asn-tRNA(Asn) or Gln-tRNA(Gln) through the transamidation of misacylated Asp-tRNA(Asn) or Glu-tRNA(Gln) in organisms which lack either or both of asparaginyl-tRNA or glutaminyl-tRNA synthetases. The reaction takes place in the presence of glutamine and ATP through an activated phospho-Asp-tRNA(Asn) or phospho-Glu-tRNA(Gln) (By similarity).</text>
</comment>
<comment type="catalytic activity">
    <reaction>
        <text>L-glutamyl-tRNA(Gln) + L-glutamine + ATP + H2O = L-glutaminyl-tRNA(Gln) + L-glutamate + ADP + phosphate + H(+)</text>
        <dbReference type="Rhea" id="RHEA:17521"/>
        <dbReference type="Rhea" id="RHEA-COMP:9681"/>
        <dbReference type="Rhea" id="RHEA-COMP:9684"/>
        <dbReference type="ChEBI" id="CHEBI:15377"/>
        <dbReference type="ChEBI" id="CHEBI:15378"/>
        <dbReference type="ChEBI" id="CHEBI:29985"/>
        <dbReference type="ChEBI" id="CHEBI:30616"/>
        <dbReference type="ChEBI" id="CHEBI:43474"/>
        <dbReference type="ChEBI" id="CHEBI:58359"/>
        <dbReference type="ChEBI" id="CHEBI:78520"/>
        <dbReference type="ChEBI" id="CHEBI:78521"/>
        <dbReference type="ChEBI" id="CHEBI:456216"/>
    </reaction>
</comment>
<comment type="catalytic activity">
    <reaction>
        <text>L-aspartyl-tRNA(Asn) + L-glutamine + ATP + H2O = L-asparaginyl-tRNA(Asn) + L-glutamate + ADP + phosphate + 2 H(+)</text>
        <dbReference type="Rhea" id="RHEA:14513"/>
        <dbReference type="Rhea" id="RHEA-COMP:9674"/>
        <dbReference type="Rhea" id="RHEA-COMP:9677"/>
        <dbReference type="ChEBI" id="CHEBI:15377"/>
        <dbReference type="ChEBI" id="CHEBI:15378"/>
        <dbReference type="ChEBI" id="CHEBI:29985"/>
        <dbReference type="ChEBI" id="CHEBI:30616"/>
        <dbReference type="ChEBI" id="CHEBI:43474"/>
        <dbReference type="ChEBI" id="CHEBI:58359"/>
        <dbReference type="ChEBI" id="CHEBI:78515"/>
        <dbReference type="ChEBI" id="CHEBI:78516"/>
        <dbReference type="ChEBI" id="CHEBI:456216"/>
    </reaction>
</comment>
<comment type="subunit">
    <text evidence="1">Heterotrimer of A, B and C subunits.</text>
</comment>
<comment type="similarity">
    <text evidence="2">Belongs to the GatC family.</text>
</comment>
<keyword id="KW-0067">ATP-binding</keyword>
<keyword id="KW-0436">Ligase</keyword>
<keyword id="KW-0547">Nucleotide-binding</keyword>
<keyword id="KW-0648">Protein biosynthesis</keyword>
<keyword id="KW-1185">Reference proteome</keyword>
<evidence type="ECO:0000250" key="1"/>
<evidence type="ECO:0000305" key="2"/>
<organism>
    <name type="scientific">Rickettsia prowazekii (strain Madrid E)</name>
    <dbReference type="NCBI Taxonomy" id="272947"/>
    <lineage>
        <taxon>Bacteria</taxon>
        <taxon>Pseudomonadati</taxon>
        <taxon>Pseudomonadota</taxon>
        <taxon>Alphaproteobacteria</taxon>
        <taxon>Rickettsiales</taxon>
        <taxon>Rickettsiaceae</taxon>
        <taxon>Rickettsieae</taxon>
        <taxon>Rickettsia</taxon>
        <taxon>typhus group</taxon>
    </lineage>
</organism>
<name>GATC_RICPR</name>
<feature type="chain" id="PRO_0000105328" description="Glutamyl-tRNA(Gln) amidotransferase subunit C">
    <location>
        <begin position="1"/>
        <end position="100"/>
    </location>
</feature>